<protein>
    <recommendedName>
        <fullName evidence="1">Curved DNA-binding protein</fullName>
    </recommendedName>
</protein>
<reference key="1">
    <citation type="journal article" date="2009" name="PLoS Genet.">
        <title>Organised genome dynamics in the Escherichia coli species results in highly diverse adaptive paths.</title>
        <authorList>
            <person name="Touchon M."/>
            <person name="Hoede C."/>
            <person name="Tenaillon O."/>
            <person name="Barbe V."/>
            <person name="Baeriswyl S."/>
            <person name="Bidet P."/>
            <person name="Bingen E."/>
            <person name="Bonacorsi S."/>
            <person name="Bouchier C."/>
            <person name="Bouvet O."/>
            <person name="Calteau A."/>
            <person name="Chiapello H."/>
            <person name="Clermont O."/>
            <person name="Cruveiller S."/>
            <person name="Danchin A."/>
            <person name="Diard M."/>
            <person name="Dossat C."/>
            <person name="Karoui M.E."/>
            <person name="Frapy E."/>
            <person name="Garry L."/>
            <person name="Ghigo J.M."/>
            <person name="Gilles A.M."/>
            <person name="Johnson J."/>
            <person name="Le Bouguenec C."/>
            <person name="Lescat M."/>
            <person name="Mangenot S."/>
            <person name="Martinez-Jehanne V."/>
            <person name="Matic I."/>
            <person name="Nassif X."/>
            <person name="Oztas S."/>
            <person name="Petit M.A."/>
            <person name="Pichon C."/>
            <person name="Rouy Z."/>
            <person name="Ruf C.S."/>
            <person name="Schneider D."/>
            <person name="Tourret J."/>
            <person name="Vacherie B."/>
            <person name="Vallenet D."/>
            <person name="Medigue C."/>
            <person name="Rocha E.P.C."/>
            <person name="Denamur E."/>
        </authorList>
    </citation>
    <scope>NUCLEOTIDE SEQUENCE [LARGE SCALE GENOMIC DNA]</scope>
    <source>
        <strain>S88 / ExPEC</strain>
    </source>
</reference>
<accession>B7MIE6</accession>
<sequence length="306" mass="34485">MELKDYYAIMGVKPTDDLKTIKTAYRRLARKYHPDVSKEPDAEARFKEVAEAWEVLSDEQRRAEYDQMWQHRNDPQFNRQFHHGDGQSFNAEDFDDIFSSIFGQHARQSRQRPATRGHDIEIEVAVFLEETLTEHKRTISYNLPVYNAFGMIEQEIPKTLNVKIPAGVGNGQRIRLKGQGTPGENGGPNGDLWLVIHIAPHPLFDIVGQDLEIVVPVSPWEAALGTKVTVPTLKESILLTIPPGSQAGQRLRVKGKGLVSKKQTGDLYAVLKIVMPPKPDENTAALWQQLADAQSSFDPRKDWGKA</sequence>
<name>CBPA_ECO45</name>
<dbReference type="EMBL" id="CU928161">
    <property type="protein sequence ID" value="CAR02346.1"/>
    <property type="molecule type" value="Genomic_DNA"/>
</dbReference>
<dbReference type="RefSeq" id="WP_000420625.1">
    <property type="nucleotide sequence ID" value="NC_011742.1"/>
</dbReference>
<dbReference type="SMR" id="B7MIE6"/>
<dbReference type="KEGG" id="ecz:ECS88_1015"/>
<dbReference type="HOGENOM" id="CLU_017633_0_0_6"/>
<dbReference type="Proteomes" id="UP000000747">
    <property type="component" value="Chromosome"/>
</dbReference>
<dbReference type="GO" id="GO:0005737">
    <property type="term" value="C:cytoplasm"/>
    <property type="evidence" value="ECO:0007669"/>
    <property type="project" value="UniProtKB-UniRule"/>
</dbReference>
<dbReference type="GO" id="GO:0009295">
    <property type="term" value="C:nucleoid"/>
    <property type="evidence" value="ECO:0007669"/>
    <property type="project" value="UniProtKB-SubCell"/>
</dbReference>
<dbReference type="GO" id="GO:0003681">
    <property type="term" value="F:bent DNA binding"/>
    <property type="evidence" value="ECO:0007669"/>
    <property type="project" value="UniProtKB-UniRule"/>
</dbReference>
<dbReference type="GO" id="GO:0051082">
    <property type="term" value="F:unfolded protein binding"/>
    <property type="evidence" value="ECO:0007669"/>
    <property type="project" value="InterPro"/>
</dbReference>
<dbReference type="GO" id="GO:0051085">
    <property type="term" value="P:chaperone cofactor-dependent protein refolding"/>
    <property type="evidence" value="ECO:0007669"/>
    <property type="project" value="TreeGrafter"/>
</dbReference>
<dbReference type="GO" id="GO:0042026">
    <property type="term" value="P:protein refolding"/>
    <property type="evidence" value="ECO:0007669"/>
    <property type="project" value="TreeGrafter"/>
</dbReference>
<dbReference type="CDD" id="cd06257">
    <property type="entry name" value="DnaJ"/>
    <property type="match status" value="1"/>
</dbReference>
<dbReference type="CDD" id="cd10747">
    <property type="entry name" value="DnaJ_C"/>
    <property type="match status" value="1"/>
</dbReference>
<dbReference type="FunFam" id="1.10.287.110:FF:000013">
    <property type="entry name" value="Curved DNA-binding protein"/>
    <property type="match status" value="1"/>
</dbReference>
<dbReference type="FunFam" id="2.60.260.20:FF:000008">
    <property type="entry name" value="Curved DNA-binding protein"/>
    <property type="match status" value="1"/>
</dbReference>
<dbReference type="FunFam" id="2.60.260.20:FF:000013">
    <property type="entry name" value="DnaJ subfamily B member 11"/>
    <property type="match status" value="1"/>
</dbReference>
<dbReference type="Gene3D" id="1.10.287.110">
    <property type="entry name" value="DnaJ domain"/>
    <property type="match status" value="1"/>
</dbReference>
<dbReference type="Gene3D" id="1.20.5.460">
    <property type="entry name" value="Single helix bin"/>
    <property type="match status" value="1"/>
</dbReference>
<dbReference type="Gene3D" id="2.60.260.20">
    <property type="entry name" value="Urease metallochaperone UreE, N-terminal domain"/>
    <property type="match status" value="2"/>
</dbReference>
<dbReference type="HAMAP" id="MF_01154">
    <property type="entry name" value="CbpA"/>
    <property type="match status" value="1"/>
</dbReference>
<dbReference type="InterPro" id="IPR023859">
    <property type="entry name" value="DNA-bd_curved-DNA"/>
</dbReference>
<dbReference type="InterPro" id="IPR002939">
    <property type="entry name" value="DnaJ_C"/>
</dbReference>
<dbReference type="InterPro" id="IPR001623">
    <property type="entry name" value="DnaJ_domain"/>
</dbReference>
<dbReference type="InterPro" id="IPR018253">
    <property type="entry name" value="DnaJ_domain_CS"/>
</dbReference>
<dbReference type="InterPro" id="IPR008971">
    <property type="entry name" value="HSP40/DnaJ_pept-bd"/>
</dbReference>
<dbReference type="InterPro" id="IPR036869">
    <property type="entry name" value="J_dom_sf"/>
</dbReference>
<dbReference type="NCBIfam" id="NF007618">
    <property type="entry name" value="PRK10266.1"/>
    <property type="match status" value="1"/>
</dbReference>
<dbReference type="PANTHER" id="PTHR43096">
    <property type="entry name" value="DNAJ HOMOLOG 1, MITOCHONDRIAL-RELATED"/>
    <property type="match status" value="1"/>
</dbReference>
<dbReference type="PANTHER" id="PTHR43096:SF52">
    <property type="entry name" value="DNAJ HOMOLOG 1, MITOCHONDRIAL-RELATED"/>
    <property type="match status" value="1"/>
</dbReference>
<dbReference type="Pfam" id="PF00226">
    <property type="entry name" value="DnaJ"/>
    <property type="match status" value="1"/>
</dbReference>
<dbReference type="Pfam" id="PF01556">
    <property type="entry name" value="DnaJ_C"/>
    <property type="match status" value="1"/>
</dbReference>
<dbReference type="PRINTS" id="PR00625">
    <property type="entry name" value="JDOMAIN"/>
</dbReference>
<dbReference type="SMART" id="SM00271">
    <property type="entry name" value="DnaJ"/>
    <property type="match status" value="1"/>
</dbReference>
<dbReference type="SUPFAM" id="SSF46565">
    <property type="entry name" value="Chaperone J-domain"/>
    <property type="match status" value="1"/>
</dbReference>
<dbReference type="SUPFAM" id="SSF49493">
    <property type="entry name" value="HSP40/DnaJ peptide-binding domain"/>
    <property type="match status" value="2"/>
</dbReference>
<dbReference type="PROSITE" id="PS00636">
    <property type="entry name" value="DNAJ_1"/>
    <property type="match status" value="1"/>
</dbReference>
<dbReference type="PROSITE" id="PS50076">
    <property type="entry name" value="DNAJ_2"/>
    <property type="match status" value="1"/>
</dbReference>
<gene>
    <name evidence="1" type="primary">cbpA</name>
    <name type="ordered locus">ECS88_1015</name>
</gene>
<comment type="function">
    <text evidence="1">DNA-binding protein that preferentially recognizes a curved DNA sequence. It is probably a functional analog of DnaJ; displays overlapping activities with DnaJ, but functions under different conditions, probably acting as a molecular chaperone in an adaptive response to environmental stresses other than heat shock. Lacks autonomous chaperone activity; binds native substrates and targets them for recognition by DnaK. Its activity is inhibited by the binding of CbpM.</text>
</comment>
<comment type="subcellular location">
    <subcellularLocation>
        <location evidence="1">Cytoplasm</location>
        <location evidence="1">Nucleoid</location>
    </subcellularLocation>
</comment>
<evidence type="ECO:0000255" key="1">
    <source>
        <dbReference type="HAMAP-Rule" id="MF_01154"/>
    </source>
</evidence>
<proteinExistence type="inferred from homology"/>
<keyword id="KW-0143">Chaperone</keyword>
<keyword id="KW-0963">Cytoplasm</keyword>
<keyword id="KW-0238">DNA-binding</keyword>
<keyword id="KW-1185">Reference proteome</keyword>
<feature type="chain" id="PRO_1000137745" description="Curved DNA-binding protein">
    <location>
        <begin position="1"/>
        <end position="306"/>
    </location>
</feature>
<feature type="domain" description="J" evidence="1">
    <location>
        <begin position="5"/>
        <end position="69"/>
    </location>
</feature>
<organism>
    <name type="scientific">Escherichia coli O45:K1 (strain S88 / ExPEC)</name>
    <dbReference type="NCBI Taxonomy" id="585035"/>
    <lineage>
        <taxon>Bacteria</taxon>
        <taxon>Pseudomonadati</taxon>
        <taxon>Pseudomonadota</taxon>
        <taxon>Gammaproteobacteria</taxon>
        <taxon>Enterobacterales</taxon>
        <taxon>Enterobacteriaceae</taxon>
        <taxon>Escherichia</taxon>
    </lineage>
</organism>